<reference key="1">
    <citation type="journal article" date="1998" name="Nucleic Acids Res.">
        <title>The complete DNA sequence and analysis of the large virulence plasmid of Escherichia coli O157:H7.</title>
        <authorList>
            <person name="Burland V."/>
            <person name="Shao Y."/>
            <person name="Perna N.T."/>
            <person name="Plunkett G. III"/>
            <person name="Sofia H.J."/>
            <person name="Blattner F.R."/>
        </authorList>
    </citation>
    <scope>NUCLEOTIDE SEQUENCE [LARGE SCALE GENOMIC DNA]</scope>
    <source>
        <strain>O157:H7 / EDL933 / ATCC 700927 / EHEC</strain>
    </source>
</reference>
<reference key="2">
    <citation type="journal article" date="1998" name="DNA Res.">
        <title>Complete nucleotide sequences of 93-kb and 3.3-kb plasmids of an enterohemorrhagic Escherichia coli O157:H7 derived from Sakai outbreak.</title>
        <authorList>
            <person name="Makino K."/>
            <person name="Ishii K."/>
            <person name="Yasunaga T."/>
            <person name="Hattori M."/>
            <person name="Yokoyama K."/>
            <person name="Yatsudo H.C."/>
            <person name="Kubota Y."/>
            <person name="Yamaichi Y."/>
            <person name="Iida T."/>
            <person name="Yamamoto K."/>
            <person name="Honda T."/>
            <person name="Han C.G."/>
            <person name="Ohtsubo A."/>
            <person name="Kasamatsu M."/>
            <person name="Hayashi T."/>
            <person name="Kuhara S."/>
            <person name="Shinagawa H."/>
        </authorList>
    </citation>
    <scope>NUCLEOTIDE SEQUENCE [LARGE SCALE GENOMIC DNA]</scope>
    <source>
        <strain>O157:H7 / Sakai / RIMD 0509952 / EHEC</strain>
    </source>
</reference>
<dbReference type="EMBL" id="AF074613">
    <property type="protein sequence ID" value="AAC70069.1"/>
    <property type="molecule type" value="Genomic_DNA"/>
</dbReference>
<dbReference type="EMBL" id="AB011549">
    <property type="protein sequence ID" value="BAA31821.1"/>
    <property type="molecule type" value="Genomic_DNA"/>
</dbReference>
<dbReference type="PIR" id="T00302">
    <property type="entry name" value="T00302"/>
</dbReference>
<dbReference type="RefSeq" id="NP_052671.1">
    <property type="nucleotide sequence ID" value="NC_002128.1"/>
</dbReference>
<dbReference type="RefSeq" id="WP_000840472.1">
    <property type="nucleotide sequence ID" value="NZ_VOAI01000049.1"/>
</dbReference>
<dbReference type="SMR" id="O82922"/>
<dbReference type="GeneID" id="1789697"/>
<dbReference type="KEGG" id="ece:Z_L7001"/>
<dbReference type="KEGG" id="ecs:pO157p64"/>
<dbReference type="PATRIC" id="fig|386585.9.peg.73"/>
<dbReference type="eggNOG" id="COG3109">
    <property type="taxonomic scope" value="Bacteria"/>
</dbReference>
<dbReference type="HOGENOM" id="CLU_120874_0_0_6"/>
<dbReference type="OMA" id="NILKPWW"/>
<dbReference type="Proteomes" id="UP000000558">
    <property type="component" value="Plasmid pO157"/>
</dbReference>
<dbReference type="Proteomes" id="UP000002519">
    <property type="component" value="Plasmid pO157"/>
</dbReference>
<dbReference type="GO" id="GO:0003723">
    <property type="term" value="F:RNA binding"/>
    <property type="evidence" value="ECO:0007669"/>
    <property type="project" value="UniProtKB-KW"/>
</dbReference>
<dbReference type="CDD" id="cd00236">
    <property type="entry name" value="FinO_conjug_rep"/>
    <property type="match status" value="1"/>
</dbReference>
<dbReference type="Gene3D" id="1.10.1710.10">
    <property type="entry name" value="ProQ/FinO domain"/>
    <property type="match status" value="1"/>
</dbReference>
<dbReference type="InterPro" id="IPR021065">
    <property type="entry name" value="Fertility_inhibition_FinO_N"/>
</dbReference>
<dbReference type="InterPro" id="IPR016103">
    <property type="entry name" value="ProQ/FinO"/>
</dbReference>
<dbReference type="InterPro" id="IPR036442">
    <property type="entry name" value="ProQ/FinO_sf"/>
</dbReference>
<dbReference type="NCBIfam" id="NF010317">
    <property type="entry name" value="PRK13754.1"/>
    <property type="match status" value="1"/>
</dbReference>
<dbReference type="Pfam" id="PF12602">
    <property type="entry name" value="FinO_N"/>
    <property type="match status" value="1"/>
</dbReference>
<dbReference type="Pfam" id="PF04352">
    <property type="entry name" value="ProQ"/>
    <property type="match status" value="1"/>
</dbReference>
<dbReference type="SMART" id="SM00945">
    <property type="entry name" value="ProQ"/>
    <property type="match status" value="1"/>
</dbReference>
<dbReference type="SUPFAM" id="SSF48657">
    <property type="entry name" value="FinO-like"/>
    <property type="match status" value="1"/>
</dbReference>
<accession>O82922</accession>
<organism>
    <name type="scientific">Escherichia coli O157:H7</name>
    <dbReference type="NCBI Taxonomy" id="83334"/>
    <lineage>
        <taxon>Bacteria</taxon>
        <taxon>Pseudomonadati</taxon>
        <taxon>Pseudomonadota</taxon>
        <taxon>Gammaproteobacteria</taxon>
        <taxon>Enterobacterales</taxon>
        <taxon>Enterobacteriaceae</taxon>
        <taxon>Escherichia</taxon>
    </lineage>
</organism>
<protein>
    <recommendedName>
        <fullName>Fertility inhibition protein</fullName>
    </recommendedName>
    <alternativeName>
        <fullName>Conjugal transfer repressor</fullName>
    </alternativeName>
</protein>
<gene>
    <name type="primary">finO</name>
    <name type="ordered locus">L7001</name>
    <name type="ordered locus">ECO57PM64</name>
</gene>
<geneLocation type="plasmid">
    <name>pO157</name>
</geneLocation>
<feature type="chain" id="PRO_0000068350" description="Fertility inhibition protein">
    <location>
        <begin position="1"/>
        <end position="186"/>
    </location>
</feature>
<feature type="region of interest" description="Disordered" evidence="2">
    <location>
        <begin position="1"/>
        <end position="20"/>
    </location>
</feature>
<keyword id="KW-0184">Conjugation</keyword>
<keyword id="KW-0614">Plasmid</keyword>
<keyword id="KW-1185">Reference proteome</keyword>
<keyword id="KW-0678">Repressor</keyword>
<keyword id="KW-0694">RNA-binding</keyword>
<keyword id="KW-0804">Transcription</keyword>
<keyword id="KW-0805">Transcription regulation</keyword>
<evidence type="ECO:0000250" key="1"/>
<evidence type="ECO:0000256" key="2">
    <source>
        <dbReference type="SAM" id="MobiDB-lite"/>
    </source>
</evidence>
<evidence type="ECO:0000305" key="3"/>
<proteinExistence type="inferred from homology"/>
<sequence length="186" mass="21147">MAEQKRPVLTLKRKTEGETPVRSRKTIINVTTPPKWKVKKQKLAEKAAREAELAAKKAQARQALSIYLNLPTQDEAVNTLKPWWPGLFDGDTPRLLACGIRDVLLEDVAQRNIPLSHKKLRRALKAITRSESYLCAMKAGACRYDTEGYVTEHISQEEEAYAAARLDKIRRQNRIKAELQAVLDEK</sequence>
<name>FINO_ECO57</name>
<comment type="function">
    <text evidence="1">One of the components on the FinOP fertility inhibition complex, which inhibits the expression of traJ gene, which in turn regulates the expression of some 20 transfer genes. The transfer genes are responsible for the process, called conjugal transfer, in which DNA is transmitted from one bacterial host to another. RNA-binding that interacts with the traJ mRNA and its antisense RNA, finP, stabilizing finP against endonucleolytic degradation and facilitating sense-antisense RNA recognition (By similarity).</text>
</comment>
<comment type="similarity">
    <text evidence="3">Belongs to the FinO family.</text>
</comment>